<gene>
    <name type="primary">SNRPGP15</name>
</gene>
<keyword id="KW-0507">mRNA processing</keyword>
<keyword id="KW-0508">mRNA splicing</keyword>
<keyword id="KW-0539">Nucleus</keyword>
<keyword id="KW-1185">Reference proteome</keyword>
<keyword id="KW-0687">Ribonucleoprotein</keyword>
<keyword id="KW-0694">RNA-binding</keyword>
<keyword id="KW-0747">Spliceosome</keyword>
<dbReference type="EMBL" id="AC012318">
    <property type="status" value="NOT_ANNOTATED_CDS"/>
    <property type="molecule type" value="Genomic_DNA"/>
</dbReference>
<dbReference type="EMBL" id="CK005235">
    <property type="status" value="NOT_ANNOTATED_CDS"/>
    <property type="molecule type" value="mRNA"/>
</dbReference>
<dbReference type="SMR" id="A8MWD9"/>
<dbReference type="FunCoup" id="A8MWD9">
    <property type="interactions" value="628"/>
</dbReference>
<dbReference type="IntAct" id="A8MWD9">
    <property type="interactions" value="96"/>
</dbReference>
<dbReference type="MINT" id="A8MWD9"/>
<dbReference type="GlyGen" id="A8MWD9">
    <property type="glycosylation" value="1 site, 1 O-linked glycan (1 site)"/>
</dbReference>
<dbReference type="iPTMnet" id="A8MWD9"/>
<dbReference type="MetOSite" id="A8MWD9"/>
<dbReference type="PhosphoSitePlus" id="A8MWD9"/>
<dbReference type="BioMuta" id="HGNC:49371"/>
<dbReference type="jPOST" id="A8MWD9"/>
<dbReference type="MassIVE" id="A8MWD9"/>
<dbReference type="Pumba" id="A8MWD9"/>
<dbReference type="AGR" id="HGNC:49371"/>
<dbReference type="GeneCards" id="SNRPGP15"/>
<dbReference type="HGNC" id="HGNC:49371">
    <property type="gene designation" value="SNRPGP15"/>
</dbReference>
<dbReference type="neXtProt" id="NX_A8MWD9"/>
<dbReference type="InParanoid" id="A8MWD9"/>
<dbReference type="PAN-GO" id="A8MWD9">
    <property type="GO annotations" value="13 GO annotations based on evolutionary models"/>
</dbReference>
<dbReference type="PhylomeDB" id="A8MWD9"/>
<dbReference type="PathwayCommons" id="A8MWD9"/>
<dbReference type="SignaLink" id="A8MWD9"/>
<dbReference type="Pharos" id="A8MWD9">
    <property type="development level" value="Tdark"/>
</dbReference>
<dbReference type="Proteomes" id="UP000005640">
    <property type="component" value="Unplaced"/>
</dbReference>
<dbReference type="RNAct" id="A8MWD9">
    <property type="molecule type" value="protein"/>
</dbReference>
<dbReference type="GO" id="GO:0071013">
    <property type="term" value="C:catalytic step 2 spliceosome"/>
    <property type="evidence" value="ECO:0000318"/>
    <property type="project" value="GO_Central"/>
</dbReference>
<dbReference type="GO" id="GO:0043186">
    <property type="term" value="C:P granule"/>
    <property type="evidence" value="ECO:0000318"/>
    <property type="project" value="GO_Central"/>
</dbReference>
<dbReference type="GO" id="GO:0071011">
    <property type="term" value="C:precatalytic spliceosome"/>
    <property type="evidence" value="ECO:0000318"/>
    <property type="project" value="GO_Central"/>
</dbReference>
<dbReference type="GO" id="GO:0034719">
    <property type="term" value="C:SMN-Sm protein complex"/>
    <property type="evidence" value="ECO:0000318"/>
    <property type="project" value="GO_Central"/>
</dbReference>
<dbReference type="GO" id="GO:0097526">
    <property type="term" value="C:spliceosomal tri-snRNP complex"/>
    <property type="evidence" value="ECO:0000318"/>
    <property type="project" value="GO_Central"/>
</dbReference>
<dbReference type="GO" id="GO:0005685">
    <property type="term" value="C:U1 snRNP"/>
    <property type="evidence" value="ECO:0000318"/>
    <property type="project" value="GO_Central"/>
</dbReference>
<dbReference type="GO" id="GO:0005689">
    <property type="term" value="C:U12-type spliceosomal complex"/>
    <property type="evidence" value="ECO:0000318"/>
    <property type="project" value="GO_Central"/>
</dbReference>
<dbReference type="GO" id="GO:0005686">
    <property type="term" value="C:U2 snRNP"/>
    <property type="evidence" value="ECO:0000318"/>
    <property type="project" value="GO_Central"/>
</dbReference>
<dbReference type="GO" id="GO:0071004">
    <property type="term" value="C:U2-type prespliceosome"/>
    <property type="evidence" value="ECO:0000318"/>
    <property type="project" value="GO_Central"/>
</dbReference>
<dbReference type="GO" id="GO:0005687">
    <property type="term" value="C:U4 snRNP"/>
    <property type="evidence" value="ECO:0000318"/>
    <property type="project" value="GO_Central"/>
</dbReference>
<dbReference type="GO" id="GO:0005682">
    <property type="term" value="C:U5 snRNP"/>
    <property type="evidence" value="ECO:0000318"/>
    <property type="project" value="GO_Central"/>
</dbReference>
<dbReference type="GO" id="GO:0003723">
    <property type="term" value="F:RNA binding"/>
    <property type="evidence" value="ECO:0007669"/>
    <property type="project" value="UniProtKB-KW"/>
</dbReference>
<dbReference type="GO" id="GO:0000398">
    <property type="term" value="P:mRNA splicing, via spliceosome"/>
    <property type="evidence" value="ECO:0000318"/>
    <property type="project" value="GO_Central"/>
</dbReference>
<dbReference type="CDD" id="cd01719">
    <property type="entry name" value="Sm_G"/>
    <property type="match status" value="1"/>
</dbReference>
<dbReference type="FunFam" id="2.30.30.100:FF:000017">
    <property type="entry name" value="Small nuclear ribonucleoprotein G"/>
    <property type="match status" value="1"/>
</dbReference>
<dbReference type="Gene3D" id="2.30.30.100">
    <property type="match status" value="1"/>
</dbReference>
<dbReference type="InterPro" id="IPR044641">
    <property type="entry name" value="Lsm7/SmG-like"/>
</dbReference>
<dbReference type="InterPro" id="IPR010920">
    <property type="entry name" value="LSM_dom_sf"/>
</dbReference>
<dbReference type="InterPro" id="IPR047575">
    <property type="entry name" value="Sm"/>
</dbReference>
<dbReference type="InterPro" id="IPR001163">
    <property type="entry name" value="Sm_dom_euk/arc"/>
</dbReference>
<dbReference type="InterPro" id="IPR034098">
    <property type="entry name" value="Sm_G"/>
</dbReference>
<dbReference type="PANTHER" id="PTHR10553">
    <property type="entry name" value="SMALL NUCLEAR RIBONUCLEOPROTEIN"/>
    <property type="match status" value="1"/>
</dbReference>
<dbReference type="PANTHER" id="PTHR10553:SF26">
    <property type="entry name" value="SMALL NUCLEAR RIBONUCLEOPROTEIN G-RELATED"/>
    <property type="match status" value="1"/>
</dbReference>
<dbReference type="Pfam" id="PF01423">
    <property type="entry name" value="LSM"/>
    <property type="match status" value="1"/>
</dbReference>
<dbReference type="PIRSF" id="PIRSF037188">
    <property type="entry name" value="U6_snRNA_Lsm7"/>
    <property type="match status" value="1"/>
</dbReference>
<dbReference type="SMART" id="SM00651">
    <property type="entry name" value="Sm"/>
    <property type="match status" value="1"/>
</dbReference>
<dbReference type="SUPFAM" id="SSF50182">
    <property type="entry name" value="Sm-like ribonucleoproteins"/>
    <property type="match status" value="1"/>
</dbReference>
<dbReference type="PROSITE" id="PS52002">
    <property type="entry name" value="SM"/>
    <property type="match status" value="1"/>
</dbReference>
<proteinExistence type="uncertain"/>
<organism>
    <name type="scientific">Homo sapiens</name>
    <name type="common">Human</name>
    <dbReference type="NCBI Taxonomy" id="9606"/>
    <lineage>
        <taxon>Eukaryota</taxon>
        <taxon>Metazoa</taxon>
        <taxon>Chordata</taxon>
        <taxon>Craniata</taxon>
        <taxon>Vertebrata</taxon>
        <taxon>Euteleostomi</taxon>
        <taxon>Mammalia</taxon>
        <taxon>Eutheria</taxon>
        <taxon>Euarchontoglires</taxon>
        <taxon>Primates</taxon>
        <taxon>Haplorrhini</taxon>
        <taxon>Catarrhini</taxon>
        <taxon>Hominidae</taxon>
        <taxon>Homo</taxon>
    </lineage>
</organism>
<reference key="1">
    <citation type="journal article" date="2004" name="Nature">
        <title>The DNA sequence and biology of human chromosome 19.</title>
        <authorList>
            <person name="Grimwood J."/>
            <person name="Gordon L.A."/>
            <person name="Olsen A.S."/>
            <person name="Terry A."/>
            <person name="Schmutz J."/>
            <person name="Lamerdin J.E."/>
            <person name="Hellsten U."/>
            <person name="Goodstein D."/>
            <person name="Couronne O."/>
            <person name="Tran-Gyamfi M."/>
            <person name="Aerts A."/>
            <person name="Altherr M."/>
            <person name="Ashworth L."/>
            <person name="Bajorek E."/>
            <person name="Black S."/>
            <person name="Branscomb E."/>
            <person name="Caenepeel S."/>
            <person name="Carrano A.V."/>
            <person name="Caoile C."/>
            <person name="Chan Y.M."/>
            <person name="Christensen M."/>
            <person name="Cleland C.A."/>
            <person name="Copeland A."/>
            <person name="Dalin E."/>
            <person name="Dehal P."/>
            <person name="Denys M."/>
            <person name="Detter J.C."/>
            <person name="Escobar J."/>
            <person name="Flowers D."/>
            <person name="Fotopulos D."/>
            <person name="Garcia C."/>
            <person name="Georgescu A.M."/>
            <person name="Glavina T."/>
            <person name="Gomez M."/>
            <person name="Gonzales E."/>
            <person name="Groza M."/>
            <person name="Hammon N."/>
            <person name="Hawkins T."/>
            <person name="Haydu L."/>
            <person name="Ho I."/>
            <person name="Huang W."/>
            <person name="Israni S."/>
            <person name="Jett J."/>
            <person name="Kadner K."/>
            <person name="Kimball H."/>
            <person name="Kobayashi A."/>
            <person name="Larionov V."/>
            <person name="Leem S.-H."/>
            <person name="Lopez F."/>
            <person name="Lou Y."/>
            <person name="Lowry S."/>
            <person name="Malfatti S."/>
            <person name="Martinez D."/>
            <person name="McCready P.M."/>
            <person name="Medina C."/>
            <person name="Morgan J."/>
            <person name="Nelson K."/>
            <person name="Nolan M."/>
            <person name="Ovcharenko I."/>
            <person name="Pitluck S."/>
            <person name="Pollard M."/>
            <person name="Popkie A.P."/>
            <person name="Predki P."/>
            <person name="Quan G."/>
            <person name="Ramirez L."/>
            <person name="Rash S."/>
            <person name="Retterer J."/>
            <person name="Rodriguez A."/>
            <person name="Rogers S."/>
            <person name="Salamov A."/>
            <person name="Salazar A."/>
            <person name="She X."/>
            <person name="Smith D."/>
            <person name="Slezak T."/>
            <person name="Solovyev V."/>
            <person name="Thayer N."/>
            <person name="Tice H."/>
            <person name="Tsai M."/>
            <person name="Ustaszewska A."/>
            <person name="Vo N."/>
            <person name="Wagner M."/>
            <person name="Wheeler J."/>
            <person name="Wu K."/>
            <person name="Xie G."/>
            <person name="Yang J."/>
            <person name="Dubchak I."/>
            <person name="Furey T.S."/>
            <person name="DeJong P."/>
            <person name="Dickson M."/>
            <person name="Gordon D."/>
            <person name="Eichler E.E."/>
            <person name="Pennacchio L.A."/>
            <person name="Richardson P."/>
            <person name="Stubbs L."/>
            <person name="Rokhsar D.S."/>
            <person name="Myers R.M."/>
            <person name="Rubin E.M."/>
            <person name="Lucas S.M."/>
        </authorList>
    </citation>
    <scope>NUCLEOTIDE SEQUENCE [LARGE SCALE GENOMIC DNA]</scope>
</reference>
<reference key="2">
    <citation type="journal article" date="2004" name="Genome Res.">
        <title>The status, quality, and expansion of the NIH full-length cDNA project: the Mammalian Gene Collection (MGC).</title>
        <authorList>
            <consortium name="The MGC Project Team"/>
        </authorList>
    </citation>
    <scope>NUCLEOTIDE SEQUENCE [LARGE SCALE MRNA]</scope>
    <source>
        <tissue>Frontal cortex</tissue>
    </source>
</reference>
<comment type="function">
    <text evidence="1">Associated with snRNP U1, U2, U4/U6 and U5.</text>
</comment>
<comment type="subcellular location">
    <subcellularLocation>
        <location evidence="1">Nucleus</location>
    </subcellularLocation>
</comment>
<comment type="similarity">
    <text evidence="3">Belongs to the snRNP Sm proteins family.</text>
</comment>
<comment type="caution">
    <text evidence="3">Could be the product of a pseudogene.</text>
</comment>
<sequence length="76" mass="8544">MSKAHPPELKKFTDKKFSLKLNGGRHVQGILRGFDPFMNLVIDECVEMATSGQQKNIGMVEIRGNSIIMLEALERV</sequence>
<accession>A8MWD9</accession>
<name>RUXGL_HUMAN</name>
<feature type="chain" id="PRO_0000348240" description="Putative small nuclear ribonucleoprotein G-like protein 15">
    <location>
        <begin position="1"/>
        <end position="76"/>
    </location>
</feature>
<feature type="domain" description="Sm" evidence="2">
    <location>
        <begin position="4"/>
        <end position="76"/>
    </location>
</feature>
<feature type="sequence conflict" description="In Ref. 2; CK005235." evidence="3" ref="2">
    <original>T</original>
    <variation>I</variation>
    <location>
        <position position="50"/>
    </location>
</feature>
<feature type="sequence conflict" description="In Ref. 2; CK005235." evidence="3" ref="2">
    <original>I</original>
    <variation>F</variation>
    <location>
        <position position="68"/>
    </location>
</feature>
<feature type="sequence conflict" description="In Ref. 2; CK005235." evidence="3" ref="2">
    <original>L</original>
    <variation>K</variation>
    <location>
        <position position="73"/>
    </location>
</feature>
<evidence type="ECO:0000250" key="1"/>
<evidence type="ECO:0000255" key="2">
    <source>
        <dbReference type="PROSITE-ProRule" id="PRU01346"/>
    </source>
</evidence>
<evidence type="ECO:0000305" key="3"/>
<protein>
    <recommendedName>
        <fullName>Putative small nuclear ribonucleoprotein G-like protein 15</fullName>
    </recommendedName>
</protein>